<dbReference type="EMBL" id="J02459">
    <property type="protein sequence ID" value="AAA96581.1"/>
    <property type="molecule type" value="Genomic_DNA"/>
</dbReference>
<dbReference type="EMBL" id="X00166">
    <property type="protein sequence ID" value="CAA24991.1"/>
    <property type="molecule type" value="Genomic_DNA"/>
</dbReference>
<dbReference type="PIR" id="A14086">
    <property type="entry name" value="RPBPL"/>
</dbReference>
<dbReference type="RefSeq" id="NP_040628.1">
    <property type="nucleotide sequence ID" value="NC_001416.1"/>
</dbReference>
<dbReference type="PDB" id="1F39">
    <property type="method" value="X-ray"/>
    <property type="resolution" value="1.90 A"/>
    <property type="chains" value="A/B=137-237"/>
</dbReference>
<dbReference type="PDB" id="1KCA">
    <property type="method" value="X-ray"/>
    <property type="resolution" value="2.91 A"/>
    <property type="chains" value="A/B/C/D/E/F/G/H=133-237"/>
</dbReference>
<dbReference type="PDB" id="1LLI">
    <property type="method" value="X-ray"/>
    <property type="resolution" value="2.10 A"/>
    <property type="chains" value="A/B=2-93"/>
</dbReference>
<dbReference type="PDB" id="1LMB">
    <property type="method" value="X-ray"/>
    <property type="resolution" value="1.80 A"/>
    <property type="chains" value="3/4=2-93"/>
</dbReference>
<dbReference type="PDB" id="1LRP">
    <property type="method" value="X-ray"/>
    <property type="resolution" value="3.20 A"/>
    <property type="chains" value="A/B/C=2-93"/>
</dbReference>
<dbReference type="PDB" id="1RIO">
    <property type="method" value="X-ray"/>
    <property type="resolution" value="2.30 A"/>
    <property type="chains" value="A/B=1-92"/>
</dbReference>
<dbReference type="PDB" id="3BDN">
    <property type="method" value="X-ray"/>
    <property type="resolution" value="3.91 A"/>
    <property type="chains" value="A/B=2-237"/>
</dbReference>
<dbReference type="PDB" id="3KZ3">
    <property type="method" value="X-ray"/>
    <property type="resolution" value="1.64 A"/>
    <property type="chains" value="A/B=8-85"/>
</dbReference>
<dbReference type="PDB" id="3WOA">
    <property type="method" value="X-ray"/>
    <property type="resolution" value="2.00 A"/>
    <property type="chains" value="A=1-46"/>
</dbReference>
<dbReference type="PDB" id="5ZCA">
    <property type="method" value="X-ray"/>
    <property type="resolution" value="1.80 A"/>
    <property type="chains" value="A=1-21"/>
</dbReference>
<dbReference type="PDB" id="7JVT">
    <property type="method" value="X-ray"/>
    <property type="resolution" value="3.16 A"/>
    <property type="chains" value="C/D=1-93"/>
</dbReference>
<dbReference type="PDB" id="8GMU">
    <property type="method" value="EM"/>
    <property type="resolution" value="2.78 A"/>
    <property type="chains" value="A=102-237"/>
</dbReference>
<dbReference type="PDBsum" id="1F39"/>
<dbReference type="PDBsum" id="1KCA"/>
<dbReference type="PDBsum" id="1LLI"/>
<dbReference type="PDBsum" id="1LMB"/>
<dbReference type="PDBsum" id="1LRP"/>
<dbReference type="PDBsum" id="1RIO"/>
<dbReference type="PDBsum" id="3BDN"/>
<dbReference type="PDBsum" id="3KZ3"/>
<dbReference type="PDBsum" id="3WOA"/>
<dbReference type="PDBsum" id="5ZCA"/>
<dbReference type="PDBsum" id="7JVT"/>
<dbReference type="PDBsum" id="8GMU"/>
<dbReference type="EMDB" id="EMD-34154"/>
<dbReference type="SMR" id="P03034"/>
<dbReference type="DIP" id="DIP-17006N"/>
<dbReference type="IntAct" id="P03034">
    <property type="interactions" value="2"/>
</dbReference>
<dbReference type="MEROPS" id="S24.002"/>
<dbReference type="GeneID" id="2703537"/>
<dbReference type="KEGG" id="vg:3827059"/>
<dbReference type="EvolutionaryTrace" id="P03034"/>
<dbReference type="Proteomes" id="UP000001711">
    <property type="component" value="Genome"/>
</dbReference>
<dbReference type="GO" id="GO:0001046">
    <property type="term" value="F:core promoter sequence-specific DNA binding"/>
    <property type="evidence" value="ECO:0000314"/>
    <property type="project" value="CAFA"/>
</dbReference>
<dbReference type="GO" id="GO:0042802">
    <property type="term" value="F:identical protein binding"/>
    <property type="evidence" value="ECO:0000353"/>
    <property type="project" value="IntAct"/>
</dbReference>
<dbReference type="GO" id="GO:0098689">
    <property type="term" value="P:latency-replication decision"/>
    <property type="evidence" value="ECO:0007669"/>
    <property type="project" value="UniProtKB-KW"/>
</dbReference>
<dbReference type="GO" id="GO:0019044">
    <property type="term" value="P:maintenance of viral latency"/>
    <property type="evidence" value="ECO:0000315"/>
    <property type="project" value="CAFA"/>
</dbReference>
<dbReference type="GO" id="GO:0010944">
    <property type="term" value="P:negative regulation of transcription by competitive promoter binding"/>
    <property type="evidence" value="ECO:0000314"/>
    <property type="project" value="CAFA"/>
</dbReference>
<dbReference type="GO" id="GO:0050434">
    <property type="term" value="P:positive regulation of viral transcription"/>
    <property type="evidence" value="ECO:0000314"/>
    <property type="project" value="CAFA"/>
</dbReference>
<dbReference type="CDD" id="cd00093">
    <property type="entry name" value="HTH_XRE"/>
    <property type="match status" value="1"/>
</dbReference>
<dbReference type="CDD" id="cd06529">
    <property type="entry name" value="S24_LexA-like"/>
    <property type="match status" value="1"/>
</dbReference>
<dbReference type="FunFam" id="1.10.260.40:FF:000034">
    <property type="entry name" value="LexA family transcriptional repressor"/>
    <property type="match status" value="1"/>
</dbReference>
<dbReference type="FunFam" id="2.10.109.10:FF:000009">
    <property type="entry name" value="Prophage repressor CI"/>
    <property type="match status" value="1"/>
</dbReference>
<dbReference type="Gene3D" id="1.10.260.40">
    <property type="entry name" value="lambda repressor-like DNA-binding domains"/>
    <property type="match status" value="1"/>
</dbReference>
<dbReference type="Gene3D" id="2.10.109.10">
    <property type="entry name" value="Umud Fragment, subunit A"/>
    <property type="match status" value="1"/>
</dbReference>
<dbReference type="InterPro" id="IPR001387">
    <property type="entry name" value="Cro/C1-type_HTH"/>
</dbReference>
<dbReference type="InterPro" id="IPR010982">
    <property type="entry name" value="Lambda_DNA-bd_dom_sf"/>
</dbReference>
<dbReference type="InterPro" id="IPR039418">
    <property type="entry name" value="LexA-like"/>
</dbReference>
<dbReference type="InterPro" id="IPR036286">
    <property type="entry name" value="LexA/Signal_pep-like_sf"/>
</dbReference>
<dbReference type="InterPro" id="IPR050077">
    <property type="entry name" value="LexA_repressor"/>
</dbReference>
<dbReference type="InterPro" id="IPR015927">
    <property type="entry name" value="Peptidase_S24_S26A/B/C"/>
</dbReference>
<dbReference type="PANTHER" id="PTHR33516">
    <property type="entry name" value="LEXA REPRESSOR"/>
    <property type="match status" value="1"/>
</dbReference>
<dbReference type="PANTHER" id="PTHR33516:SF2">
    <property type="entry name" value="LEXA REPRESSOR-RELATED"/>
    <property type="match status" value="1"/>
</dbReference>
<dbReference type="Pfam" id="PF01381">
    <property type="entry name" value="HTH_3"/>
    <property type="match status" value="1"/>
</dbReference>
<dbReference type="Pfam" id="PF00717">
    <property type="entry name" value="Peptidase_S24"/>
    <property type="match status" value="1"/>
</dbReference>
<dbReference type="SMART" id="SM00530">
    <property type="entry name" value="HTH_XRE"/>
    <property type="match status" value="1"/>
</dbReference>
<dbReference type="SUPFAM" id="SSF47413">
    <property type="entry name" value="lambda repressor-like DNA-binding domains"/>
    <property type="match status" value="1"/>
</dbReference>
<dbReference type="SUPFAM" id="SSF51306">
    <property type="entry name" value="LexA/Signal peptidase"/>
    <property type="match status" value="1"/>
</dbReference>
<dbReference type="PROSITE" id="PS50943">
    <property type="entry name" value="HTH_CROC1"/>
    <property type="match status" value="1"/>
</dbReference>
<accession>P03034</accession>
<organismHost>
    <name type="scientific">Escherichia coli</name>
    <dbReference type="NCBI Taxonomy" id="562"/>
</organismHost>
<protein>
    <recommendedName>
        <fullName>Repressor protein cI</fullName>
    </recommendedName>
</protein>
<organism>
    <name type="scientific">Escherichia phage lambda</name>
    <name type="common">Bacteriophage lambda</name>
    <dbReference type="NCBI Taxonomy" id="2681611"/>
    <lineage>
        <taxon>Viruses</taxon>
        <taxon>Duplodnaviria</taxon>
        <taxon>Heunggongvirae</taxon>
        <taxon>Uroviricota</taxon>
        <taxon>Caudoviricetes</taxon>
        <taxon>Lambdavirus</taxon>
        <taxon>Lambdavirus lambda</taxon>
    </lineage>
</organism>
<proteinExistence type="evidence at protein level"/>
<gene>
    <name type="primary">cI</name>
    <name type="ordered locus">lambdap88</name>
</gene>
<feature type="initiator methionine" description="Removed; by host" evidence="4">
    <location>
        <position position="1"/>
    </location>
</feature>
<feature type="chain" id="PRO_0000149715" description="Repressor protein cI">
    <location>
        <begin position="2"/>
        <end position="237"/>
    </location>
</feature>
<feature type="domain" description="HTH cro/C1-type" evidence="1">
    <location>
        <begin position="19"/>
        <end position="77"/>
    </location>
</feature>
<feature type="DNA-binding region" description="H-T-H motif" evidence="1">
    <location>
        <begin position="30"/>
        <end position="49"/>
    </location>
</feature>
<feature type="sequence conflict" description="In Ref. 2." evidence="5" ref="2">
    <original>A</original>
    <variation>T</variation>
    <location>
        <position position="67"/>
    </location>
</feature>
<feature type="sequence conflict" description="In Ref. 2." evidence="5" ref="2">
    <original>E</original>
    <variation>K</variation>
    <location>
        <position position="118"/>
    </location>
</feature>
<feature type="helix" evidence="8">
    <location>
        <begin position="10"/>
        <end position="30"/>
    </location>
</feature>
<feature type="helix" evidence="8">
    <location>
        <begin position="34"/>
        <end position="40"/>
    </location>
</feature>
<feature type="helix" evidence="8">
    <location>
        <begin position="45"/>
        <end position="52"/>
    </location>
</feature>
<feature type="helix" evidence="8">
    <location>
        <begin position="60"/>
        <end position="70"/>
    </location>
</feature>
<feature type="helix" evidence="8">
    <location>
        <begin position="74"/>
        <end position="76"/>
    </location>
</feature>
<feature type="helix" evidence="8">
    <location>
        <begin position="79"/>
        <end position="85"/>
    </location>
</feature>
<feature type="turn" evidence="7">
    <location>
        <begin position="90"/>
        <end position="92"/>
    </location>
</feature>
<feature type="strand" evidence="9">
    <location>
        <begin position="103"/>
        <end position="114"/>
    </location>
</feature>
<feature type="strand" evidence="9">
    <location>
        <begin position="120"/>
        <end position="123"/>
    </location>
</feature>
<feature type="strand" evidence="9">
    <location>
        <begin position="130"/>
        <end position="132"/>
    </location>
</feature>
<feature type="strand" evidence="6">
    <location>
        <begin position="142"/>
        <end position="145"/>
    </location>
</feature>
<feature type="strand" evidence="6">
    <location>
        <begin position="166"/>
        <end position="170"/>
    </location>
</feature>
<feature type="strand" evidence="6">
    <location>
        <begin position="180"/>
        <end position="184"/>
    </location>
</feature>
<feature type="turn" evidence="9">
    <location>
        <begin position="186"/>
        <end position="188"/>
    </location>
</feature>
<feature type="strand" evidence="6">
    <location>
        <begin position="190"/>
        <end position="198"/>
    </location>
</feature>
<feature type="strand" evidence="6">
    <location>
        <begin position="201"/>
        <end position="205"/>
    </location>
</feature>
<feature type="strand" evidence="6">
    <location>
        <begin position="221"/>
        <end position="230"/>
    </location>
</feature>
<feature type="helix" evidence="6">
    <location>
        <begin position="233"/>
        <end position="236"/>
    </location>
</feature>
<comment type="function">
    <text evidence="2 3">Acts as a transcriptional repressor that allows virus to establish and maintain latency. Prevents both the viral DNA replication and the exit programs. Clamps the two operator OL (operator left made of OL1, OL2 and OL3 sites) and OR (operator right made of OR1, OR2 and OR3 sites) together by binding to them and arranging the intervening DNA in a loop. This step allows repression of lytic pR and pL promoters by binding to OL1, OL2, OR1 and OR2 simultaneously. The binding of cI on OR2 additionally activates the transcription of the cI gene thereby mediating an autoregulatory function to maintain the latent state. Once cI is present in sufficient amount, it can repress its own transcription by binding to OL3 and OR3.</text>
</comment>
<comment type="subunit">
    <text>Homooctamer. The DNA loop is maintained by octamers of repressor cI.</text>
</comment>
<comment type="interaction">
    <interactant intactId="EBI-4478303">
        <id>P03034</id>
    </interactant>
    <interactant intactId="EBI-4478303">
        <id>P03034</id>
        <label>cI</label>
    </interactant>
    <organismsDiffer>false</organismsDiffer>
    <experiments>2</experiments>
</comment>
<comment type="miscellaneous">
    <text>Bacterial cells harboring a lysogenic lambda phage are immune to further infection by lambda. The cI repressor protein inhibits the lytic development of any additional infecting phage particles. The region of the genome that codes for the cI repressor protein is known as the immunity region.</text>
</comment>
<sequence length="237" mass="26212">MSTKKKPLTQEQLEDARRLKAIYEKKKNELGLSQESVADKMGMGQSGVGALFNGINALNAYNAALLAKILKVSVEEFSPSIAREIYEMYEAVSMQPSLRSEYEYPVFSHVQAGMFSPELRTFTKGDAERWVSTTKKASDSAFWLEVEGNSMTAPTGSKPSFPDGMLILVDPEQAVEPGDFCIARLGGDEFTFKKLIRDSGQVFLQPLNPQYPMIPCNESCSVVGKVIASQWPEETFG</sequence>
<reference key="1">
    <citation type="journal article" date="1982" name="J. Mol. Biol.">
        <title>Nucleotide sequence of bacteriophage lambda DNA.</title>
        <authorList>
            <person name="Sanger F."/>
            <person name="Coulson A.R."/>
            <person name="Hong G.F."/>
            <person name="Hill D.F."/>
            <person name="Petersen G.B."/>
        </authorList>
    </citation>
    <scope>NUCLEOTIDE SEQUENCE [LARGE SCALE GENOMIC DNA]</scope>
</reference>
<reference key="2">
    <citation type="journal article" date="1978" name="Nature">
        <title>DNA sequence of the bacteriophage gama cI gene.</title>
        <authorList>
            <person name="Sauer R.T."/>
        </authorList>
    </citation>
    <scope>NUCLEOTIDE SEQUENCE [GENOMIC DNA]</scope>
</reference>
<reference key="3">
    <citation type="journal article" date="1978" name="Biochemistry">
        <title>Primary structure of the lambda repressor.</title>
        <authorList>
            <person name="Sauer R.T."/>
            <person name="Anderegg R."/>
        </authorList>
    </citation>
    <scope>PROTEIN SEQUENCE OF 2-237</scope>
</reference>
<reference key="4">
    <citation type="journal article" date="2001" name="Genes Dev.">
        <title>Octamerization of lambda CI repressor is needed for effective repression of P(RM) and efficient switching from lysogeny.</title>
        <authorList>
            <person name="Dodd I.B."/>
            <person name="Perkins A.J."/>
            <person name="Tsemitsidis D."/>
            <person name="Egan J.B."/>
        </authorList>
    </citation>
    <scope>FUNCTION</scope>
    <scope>OLIGOMERIZATION</scope>
</reference>
<reference key="5">
    <citation type="journal article" date="2009" name="Curr. Opin. Struct. Biol.">
        <title>The bacteriophage lambda CI protein finds an asymmetric solution.</title>
        <authorList>
            <person name="Hochschild A."/>
            <person name="Lewis M."/>
        </authorList>
    </citation>
    <scope>REVIEW ON FUNCTION</scope>
</reference>
<reference key="6">
    <citation type="journal article" date="2011" name="Proc. Natl. Acad. Sci. U.S.A.">
        <title>Multilevel autoregulation of lambda repressor protein CI by DNA looping in vitro.</title>
        <authorList>
            <person name="Lewis D."/>
            <person name="Le P."/>
            <person name="Zurla C."/>
            <person name="Finzi L."/>
            <person name="Adhya S."/>
        </authorList>
    </citation>
    <scope>FUNCTION</scope>
</reference>
<reference key="7">
    <citation type="journal article" date="1983" name="J. Mol. Biol.">
        <title>Comparison of the structures of cro and lambda repressor proteins from bacteriophage lambda.</title>
        <authorList>
            <person name="Ohlendorf D.H."/>
            <person name="Anderson W.F."/>
            <person name="Lewis M."/>
            <person name="Pabo C.O."/>
            <person name="Matthews B.W."/>
        </authorList>
    </citation>
    <scope>X-RAY CRYSTALLOGRAPHY (3.2 ANGSTROMS) OF 1-93</scope>
</reference>
<reference key="8">
    <citation type="journal article" date="1988" name="Science">
        <title>Structure of the lambda complex at 2.5-A resolution: details of the repressor-operator interactions.</title>
        <authorList>
            <person name="Jordan S.R."/>
            <person name="Pabo C.O."/>
        </authorList>
    </citation>
    <scope>X-RAY CRYSTALLOGRAPHY (2.5 ANGSTROMS) OF 1-93</scope>
</reference>
<name>RPC1_LAMBD</name>
<evidence type="ECO:0000255" key="1">
    <source>
        <dbReference type="PROSITE-ProRule" id="PRU00257"/>
    </source>
</evidence>
<evidence type="ECO:0000269" key="2">
    <source>
    </source>
</evidence>
<evidence type="ECO:0000269" key="3">
    <source>
    </source>
</evidence>
<evidence type="ECO:0000269" key="4">
    <source>
    </source>
</evidence>
<evidence type="ECO:0000305" key="5"/>
<evidence type="ECO:0007829" key="6">
    <source>
        <dbReference type="PDB" id="1F39"/>
    </source>
</evidence>
<evidence type="ECO:0007829" key="7">
    <source>
        <dbReference type="PDB" id="1LMB"/>
    </source>
</evidence>
<evidence type="ECO:0007829" key="8">
    <source>
        <dbReference type="PDB" id="3KZ3"/>
    </source>
</evidence>
<evidence type="ECO:0007829" key="9">
    <source>
        <dbReference type="PDB" id="8GMU"/>
    </source>
</evidence>
<keyword id="KW-0002">3D-structure</keyword>
<keyword id="KW-0903">Direct protein sequencing</keyword>
<keyword id="KW-0238">DNA-binding</keyword>
<keyword id="KW-1252">Latency-replication decision</keyword>
<keyword id="KW-1185">Reference proteome</keyword>
<keyword id="KW-0678">Repressor</keyword>
<keyword id="KW-0804">Transcription</keyword>
<keyword id="KW-0805">Transcription regulation</keyword>
<keyword id="KW-1251">Viral latency</keyword>
<keyword id="KW-1276">Viral latency initiation and maintenance</keyword>